<comment type="function">
    <text evidence="1">ATP-dependent carboxylate-amine ligase which exhibits weak glutamate--cysteine ligase activity.</text>
</comment>
<comment type="catalytic activity">
    <reaction>
        <text>L-cysteine + L-glutamate + ATP = gamma-L-glutamyl-L-cysteine + ADP + phosphate + H(+)</text>
        <dbReference type="Rhea" id="RHEA:13285"/>
        <dbReference type="ChEBI" id="CHEBI:15378"/>
        <dbReference type="ChEBI" id="CHEBI:29985"/>
        <dbReference type="ChEBI" id="CHEBI:30616"/>
        <dbReference type="ChEBI" id="CHEBI:35235"/>
        <dbReference type="ChEBI" id="CHEBI:43474"/>
        <dbReference type="ChEBI" id="CHEBI:58173"/>
        <dbReference type="ChEBI" id="CHEBI:456216"/>
        <dbReference type="EC" id="6.3.2.2"/>
    </reaction>
</comment>
<comment type="similarity">
    <text evidence="2">In the N-terminal section; belongs to the glutamate--cysteine ligase type 2 family. YbdK subfamily.</text>
</comment>
<reference key="1">
    <citation type="journal article" date="2007" name="Genome Res.">
        <title>Genome characteristics of facultatively symbiotic Frankia sp. strains reflect host range and host plant biogeography.</title>
        <authorList>
            <person name="Normand P."/>
            <person name="Lapierre P."/>
            <person name="Tisa L.S."/>
            <person name="Gogarten J.P."/>
            <person name="Alloisio N."/>
            <person name="Bagnarol E."/>
            <person name="Bassi C.A."/>
            <person name="Berry A.M."/>
            <person name="Bickhart D.M."/>
            <person name="Choisne N."/>
            <person name="Couloux A."/>
            <person name="Cournoyer B."/>
            <person name="Cruveiller S."/>
            <person name="Daubin V."/>
            <person name="Demange N."/>
            <person name="Francino M.P."/>
            <person name="Goltsman E."/>
            <person name="Huang Y."/>
            <person name="Kopp O.R."/>
            <person name="Labarre L."/>
            <person name="Lapidus A."/>
            <person name="Lavire C."/>
            <person name="Marechal J."/>
            <person name="Martinez M."/>
            <person name="Mastronunzio J.E."/>
            <person name="Mullin B.C."/>
            <person name="Niemann J."/>
            <person name="Pujic P."/>
            <person name="Rawnsley T."/>
            <person name="Rouy Z."/>
            <person name="Schenowitz C."/>
            <person name="Sellstedt A."/>
            <person name="Tavares F."/>
            <person name="Tomkins J.P."/>
            <person name="Vallenet D."/>
            <person name="Valverde C."/>
            <person name="Wall L.G."/>
            <person name="Wang Y."/>
            <person name="Medigue C."/>
            <person name="Benson D.R."/>
        </authorList>
    </citation>
    <scope>NUCLEOTIDE SEQUENCE [LARGE SCALE GENOMIC DNA]</scope>
    <source>
        <strain>DSM 45986 / CECT 9034 / ACN14a</strain>
    </source>
</reference>
<dbReference type="EC" id="6.3.2.2"/>
<dbReference type="EMBL" id="CT573213">
    <property type="protein sequence ID" value="CAJ63131.1"/>
    <property type="molecule type" value="Genomic_DNA"/>
</dbReference>
<dbReference type="RefSeq" id="WP_011605610.1">
    <property type="nucleotide sequence ID" value="NC_008278.1"/>
</dbReference>
<dbReference type="SMR" id="Q0RHA0"/>
<dbReference type="STRING" id="326424.FRAAL4489"/>
<dbReference type="KEGG" id="fal:FRAAL4489"/>
<dbReference type="eggNOG" id="COG2170">
    <property type="taxonomic scope" value="Bacteria"/>
</dbReference>
<dbReference type="eggNOG" id="COG2308">
    <property type="taxonomic scope" value="Bacteria"/>
</dbReference>
<dbReference type="HOGENOM" id="CLU_017048_0_0_11"/>
<dbReference type="OrthoDB" id="9803842at2"/>
<dbReference type="Proteomes" id="UP000000657">
    <property type="component" value="Chromosome"/>
</dbReference>
<dbReference type="GO" id="GO:0005524">
    <property type="term" value="F:ATP binding"/>
    <property type="evidence" value="ECO:0007669"/>
    <property type="project" value="UniProtKB-KW"/>
</dbReference>
<dbReference type="GO" id="GO:0004357">
    <property type="term" value="F:glutamate-cysteine ligase activity"/>
    <property type="evidence" value="ECO:0007669"/>
    <property type="project" value="UniProtKB-EC"/>
</dbReference>
<dbReference type="GO" id="GO:0042398">
    <property type="term" value="P:modified amino acid biosynthetic process"/>
    <property type="evidence" value="ECO:0007669"/>
    <property type="project" value="InterPro"/>
</dbReference>
<dbReference type="Gene3D" id="3.30.1490.270">
    <property type="match status" value="1"/>
</dbReference>
<dbReference type="Gene3D" id="3.30.590.20">
    <property type="match status" value="1"/>
</dbReference>
<dbReference type="Gene3D" id="3.40.50.11290">
    <property type="match status" value="1"/>
</dbReference>
<dbReference type="HAMAP" id="MF_01609">
    <property type="entry name" value="Glu_cys_ligase_2"/>
    <property type="match status" value="1"/>
</dbReference>
<dbReference type="InterPro" id="IPR051680">
    <property type="entry name" value="ATP-dep_Glu-Cys_Ligase-2"/>
</dbReference>
<dbReference type="InterPro" id="IPR025841">
    <property type="entry name" value="CP_ATPgrasp_2"/>
</dbReference>
<dbReference type="InterPro" id="IPR006336">
    <property type="entry name" value="GCS2"/>
</dbReference>
<dbReference type="InterPro" id="IPR014746">
    <property type="entry name" value="Gln_synth/guanido_kin_cat_dom"/>
</dbReference>
<dbReference type="InterPro" id="IPR011793">
    <property type="entry name" value="YbdK"/>
</dbReference>
<dbReference type="NCBIfam" id="TIGR02050">
    <property type="entry name" value="gshA_cyan_rel"/>
    <property type="match status" value="1"/>
</dbReference>
<dbReference type="NCBIfam" id="NF010041">
    <property type="entry name" value="PRK13517.1-1"/>
    <property type="match status" value="1"/>
</dbReference>
<dbReference type="PANTHER" id="PTHR34595">
    <property type="entry name" value="BLR5612 PROTEIN"/>
    <property type="match status" value="1"/>
</dbReference>
<dbReference type="PANTHER" id="PTHR34595:SF7">
    <property type="entry name" value="SLL1039 PROTEIN"/>
    <property type="match status" value="1"/>
</dbReference>
<dbReference type="Pfam" id="PF14403">
    <property type="entry name" value="CP_ATPgrasp_2"/>
    <property type="match status" value="1"/>
</dbReference>
<dbReference type="Pfam" id="PF04107">
    <property type="entry name" value="GCS2"/>
    <property type="match status" value="1"/>
</dbReference>
<dbReference type="SUPFAM" id="SSF55931">
    <property type="entry name" value="Glutamine synthetase/guanido kinase"/>
    <property type="match status" value="1"/>
</dbReference>
<dbReference type="SUPFAM" id="SSF56059">
    <property type="entry name" value="Glutathione synthetase ATP-binding domain-like"/>
    <property type="match status" value="1"/>
</dbReference>
<evidence type="ECO:0000250" key="1"/>
<evidence type="ECO:0000305" key="2"/>
<gene>
    <name type="ordered locus">FRAAL4489</name>
</gene>
<name>GCS23_FRAAA</name>
<keyword id="KW-0067">ATP-binding</keyword>
<keyword id="KW-0436">Ligase</keyword>
<keyword id="KW-0547">Nucleotide-binding</keyword>
<keyword id="KW-1185">Reference proteome</keyword>
<sequence>MSDARNVAVGVEEEFHILDLTTRQLVPRAEEILQRLDKDSFSPELLKSVVETNSQPTVDLLALRSNLLDLRRRLAEAAGELGLGPAASGTVPILDMDLLDVSRDARYEQMTEDYQIVAREQLICGAQVHVDVADRDLAMAVVAWTAPWLPMLLALSASSPYWLGADSGYASMRTLVWQRWPTAGVAGSFQTAAEYDQLIADLIKSGVISDPGMVYFDVRPSAHLPTVELRICDACPDVDNVILIAGLFRALVGRAIEEIEAGGQAPPPRAELLRAATWRAARSGLEGDLVDIFGAGPVPARAMLRRMLEEVRPQLERYDDWELIDNLAEQAAGRGSSALRQRRAFARRGLLTDVADLILAETRDVPPAGASLGVAPAVSAPDQIAPILLERYQPAGYDEVVDEHGAVRPQYRAVMRTLERLGPDTLDERVGAREAEQTDRGITFRVNGDSASRPFPFDIVPRIVAADDWAVLGRGLGQRVRALEAFLHDVYGERAAVADGIVPPWVVNDAPGLRHGGRAPGRDAIRITTAGIDLVRGGDGGWLVLEDNLRVPSGIAYAVEGRRLAESVLPELGPPPGILRLGTVPALLHDALVAAAPPAVTGEPAVAVLTSGPADSAYFEHAMLAEEMGVPLVEPGALLVDDDVAYRVDDGRRRRVDVLYRRIDEDELFAAPGADGAPLGPALLRAVRAGQVSVANAPGNGIGDDKVVYAYVPRMVTYYLGEQPVLDDVPTYVCGDPEQCEHVLANLDQLVVKPVDGFGGSGVVIGPHAEPYQLTAVREQILADPRRWIGQEVVALSTHPTWHDSHLEPCAVDLRVFVYAGVEPVVVPAALSRVAPPGSLIVNSSQGGGSKDTWIPRR</sequence>
<accession>Q0RHA0</accession>
<organism>
    <name type="scientific">Frankia alni (strain DSM 45986 / CECT 9034 / ACN14a)</name>
    <dbReference type="NCBI Taxonomy" id="326424"/>
    <lineage>
        <taxon>Bacteria</taxon>
        <taxon>Bacillati</taxon>
        <taxon>Actinomycetota</taxon>
        <taxon>Actinomycetes</taxon>
        <taxon>Frankiales</taxon>
        <taxon>Frankiaceae</taxon>
        <taxon>Frankia</taxon>
    </lineage>
</organism>
<proteinExistence type="inferred from homology"/>
<feature type="chain" id="PRO_0000323509" description="Putative glutamate--cysteine ligase 2-3">
    <location>
        <begin position="1"/>
        <end position="858"/>
    </location>
</feature>
<feature type="region of interest" description="Carboxylate-amine ligase">
    <location>
        <begin position="1"/>
        <end position="372"/>
    </location>
</feature>
<feature type="region of interest" description="Unknown">
    <location>
        <begin position="373"/>
        <end position="858"/>
    </location>
</feature>
<protein>
    <recommendedName>
        <fullName>Putative glutamate--cysteine ligase 2-3</fullName>
        <ecNumber>6.3.2.2</ecNumber>
    </recommendedName>
    <alternativeName>
        <fullName>Gamma-glutamylcysteine synthetase 2-3</fullName>
        <shortName>GCS 2-3</shortName>
        <shortName>Gamma-GCS 2-3</shortName>
    </alternativeName>
</protein>